<keyword id="KW-0119">Carbohydrate metabolism</keyword>
<keyword id="KW-0963">Cytoplasm</keyword>
<keyword id="KW-0413">Isomerase</keyword>
<keyword id="KW-0460">Magnesium</keyword>
<keyword id="KW-0479">Metal-binding</keyword>
<keyword id="KW-0859">Xylose metabolism</keyword>
<sequence>MQAYFDQLDRVRYEGSKSSNPLAFRHYNPDELVLGKRMEEHLRFAACYWHTFCWNGADMFGVGAFNRPWQQPGEALALAKRKADVAFEFFHKLHVPFYCFHDVDVSPEGASLKEYINNFAQMVDVLAGKQEESGVKLLWGTANCFTNPRYGAGAATNPDPEVFSWAATQVVTAMEATHKLGGENYVLWGGREGYETLLNTDLRQEREQLGRFMQMVVEHKHKIGFQGTLLIEPKPQEPTKHQYDYDAATVYGFLKQFGLEKEIKLNIEANHATLAGHSFHHEIATAIALGLFGSVDANRGDAQLGWDTDQFPNSVEENALVMYEILKAGGFTTGGLNFDAKVRRQSTDKYDLFYGHIGAMDTMALALKIAARMIEDGELDKRIAQRYSGWNSELGQQILKGQMSLADLAKYAQEHNLSPVHQSGRQEQLENLVNHYLFDK</sequence>
<evidence type="ECO:0000255" key="1">
    <source>
        <dbReference type="HAMAP-Rule" id="MF_00455"/>
    </source>
</evidence>
<dbReference type="EC" id="5.3.1.5" evidence="1"/>
<dbReference type="EMBL" id="CP000802">
    <property type="protein sequence ID" value="ABV07977.1"/>
    <property type="molecule type" value="Genomic_DNA"/>
</dbReference>
<dbReference type="RefSeq" id="WP_001149592.1">
    <property type="nucleotide sequence ID" value="NC_009800.1"/>
</dbReference>
<dbReference type="SMR" id="A8A623"/>
<dbReference type="GeneID" id="75173765"/>
<dbReference type="KEGG" id="ecx:EcHS_A3768"/>
<dbReference type="HOGENOM" id="CLU_037261_1_0_6"/>
<dbReference type="GO" id="GO:0005737">
    <property type="term" value="C:cytoplasm"/>
    <property type="evidence" value="ECO:0007669"/>
    <property type="project" value="UniProtKB-SubCell"/>
</dbReference>
<dbReference type="GO" id="GO:0000287">
    <property type="term" value="F:magnesium ion binding"/>
    <property type="evidence" value="ECO:0007669"/>
    <property type="project" value="UniProtKB-UniRule"/>
</dbReference>
<dbReference type="GO" id="GO:0009045">
    <property type="term" value="F:xylose isomerase activity"/>
    <property type="evidence" value="ECO:0007669"/>
    <property type="project" value="UniProtKB-UniRule"/>
</dbReference>
<dbReference type="GO" id="GO:0042732">
    <property type="term" value="P:D-xylose metabolic process"/>
    <property type="evidence" value="ECO:0007669"/>
    <property type="project" value="UniProtKB-UniRule"/>
</dbReference>
<dbReference type="FunFam" id="3.20.20.150:FF:000002">
    <property type="entry name" value="Xylose isomerase"/>
    <property type="match status" value="1"/>
</dbReference>
<dbReference type="Gene3D" id="3.20.20.150">
    <property type="entry name" value="Divalent-metal-dependent TIM barrel enzymes"/>
    <property type="match status" value="1"/>
</dbReference>
<dbReference type="HAMAP" id="MF_00455">
    <property type="entry name" value="Xylose_isom_A"/>
    <property type="match status" value="1"/>
</dbReference>
<dbReference type="InterPro" id="IPR036237">
    <property type="entry name" value="Xyl_isomerase-like_sf"/>
</dbReference>
<dbReference type="InterPro" id="IPR013452">
    <property type="entry name" value="Xylose_isom_bac"/>
</dbReference>
<dbReference type="InterPro" id="IPR001998">
    <property type="entry name" value="Xylose_isomerase"/>
</dbReference>
<dbReference type="NCBIfam" id="NF003998">
    <property type="entry name" value="PRK05474.1"/>
    <property type="match status" value="1"/>
</dbReference>
<dbReference type="NCBIfam" id="TIGR02630">
    <property type="entry name" value="xylose_isom_A"/>
    <property type="match status" value="1"/>
</dbReference>
<dbReference type="PANTHER" id="PTHR48408">
    <property type="match status" value="1"/>
</dbReference>
<dbReference type="PANTHER" id="PTHR48408:SF1">
    <property type="entry name" value="XYLOSE ISOMERASE"/>
    <property type="match status" value="1"/>
</dbReference>
<dbReference type="PRINTS" id="PR00688">
    <property type="entry name" value="XYLOSISMRASE"/>
</dbReference>
<dbReference type="SUPFAM" id="SSF51658">
    <property type="entry name" value="Xylose isomerase-like"/>
    <property type="match status" value="1"/>
</dbReference>
<dbReference type="PROSITE" id="PS51415">
    <property type="entry name" value="XYLOSE_ISOMERASE"/>
    <property type="match status" value="1"/>
</dbReference>
<accession>A8A623</accession>
<gene>
    <name evidence="1" type="primary">xylA</name>
    <name type="ordered locus">EcHS_A3768</name>
</gene>
<organism>
    <name type="scientific">Escherichia coli O9:H4 (strain HS)</name>
    <dbReference type="NCBI Taxonomy" id="331112"/>
    <lineage>
        <taxon>Bacteria</taxon>
        <taxon>Pseudomonadati</taxon>
        <taxon>Pseudomonadota</taxon>
        <taxon>Gammaproteobacteria</taxon>
        <taxon>Enterobacterales</taxon>
        <taxon>Enterobacteriaceae</taxon>
        <taxon>Escherichia</taxon>
    </lineage>
</organism>
<proteinExistence type="inferred from homology"/>
<protein>
    <recommendedName>
        <fullName evidence="1">Xylose isomerase</fullName>
        <ecNumber evidence="1">5.3.1.5</ecNumber>
    </recommendedName>
</protein>
<reference key="1">
    <citation type="journal article" date="2008" name="J. Bacteriol.">
        <title>The pangenome structure of Escherichia coli: comparative genomic analysis of E. coli commensal and pathogenic isolates.</title>
        <authorList>
            <person name="Rasko D.A."/>
            <person name="Rosovitz M.J."/>
            <person name="Myers G.S.A."/>
            <person name="Mongodin E.F."/>
            <person name="Fricke W.F."/>
            <person name="Gajer P."/>
            <person name="Crabtree J."/>
            <person name="Sebaihia M."/>
            <person name="Thomson N.R."/>
            <person name="Chaudhuri R."/>
            <person name="Henderson I.R."/>
            <person name="Sperandio V."/>
            <person name="Ravel J."/>
        </authorList>
    </citation>
    <scope>NUCLEOTIDE SEQUENCE [LARGE SCALE GENOMIC DNA]</scope>
    <source>
        <strain>HS</strain>
    </source>
</reference>
<name>XYLA_ECOHS</name>
<comment type="catalytic activity">
    <reaction evidence="1">
        <text>alpha-D-xylose = alpha-D-xylulofuranose</text>
        <dbReference type="Rhea" id="RHEA:22816"/>
        <dbReference type="ChEBI" id="CHEBI:28518"/>
        <dbReference type="ChEBI" id="CHEBI:188998"/>
        <dbReference type="EC" id="5.3.1.5"/>
    </reaction>
</comment>
<comment type="cofactor">
    <cofactor evidence="1">
        <name>Mg(2+)</name>
        <dbReference type="ChEBI" id="CHEBI:18420"/>
    </cofactor>
    <text evidence="1">Binds 2 magnesium ions per subunit.</text>
</comment>
<comment type="subunit">
    <text evidence="1">Homotetramer.</text>
</comment>
<comment type="subcellular location">
    <subcellularLocation>
        <location evidence="1">Cytoplasm</location>
    </subcellularLocation>
</comment>
<comment type="similarity">
    <text evidence="1">Belongs to the xylose isomerase family.</text>
</comment>
<feature type="chain" id="PRO_1000060320" description="Xylose isomerase">
    <location>
        <begin position="1"/>
        <end position="440"/>
    </location>
</feature>
<feature type="active site" evidence="1">
    <location>
        <position position="101"/>
    </location>
</feature>
<feature type="active site" evidence="1">
    <location>
        <position position="104"/>
    </location>
</feature>
<feature type="binding site" evidence="1">
    <location>
        <position position="232"/>
    </location>
    <ligand>
        <name>Mg(2+)</name>
        <dbReference type="ChEBI" id="CHEBI:18420"/>
        <label>1</label>
    </ligand>
</feature>
<feature type="binding site" evidence="1">
    <location>
        <position position="268"/>
    </location>
    <ligand>
        <name>Mg(2+)</name>
        <dbReference type="ChEBI" id="CHEBI:18420"/>
        <label>1</label>
    </ligand>
</feature>
<feature type="binding site" evidence="1">
    <location>
        <position position="268"/>
    </location>
    <ligand>
        <name>Mg(2+)</name>
        <dbReference type="ChEBI" id="CHEBI:18420"/>
        <label>2</label>
    </ligand>
</feature>
<feature type="binding site" evidence="1">
    <location>
        <position position="271"/>
    </location>
    <ligand>
        <name>Mg(2+)</name>
        <dbReference type="ChEBI" id="CHEBI:18420"/>
        <label>2</label>
    </ligand>
</feature>
<feature type="binding site" evidence="1">
    <location>
        <position position="296"/>
    </location>
    <ligand>
        <name>Mg(2+)</name>
        <dbReference type="ChEBI" id="CHEBI:18420"/>
        <label>1</label>
    </ligand>
</feature>
<feature type="binding site" evidence="1">
    <location>
        <position position="307"/>
    </location>
    <ligand>
        <name>Mg(2+)</name>
        <dbReference type="ChEBI" id="CHEBI:18420"/>
        <label>2</label>
    </ligand>
</feature>
<feature type="binding site" evidence="1">
    <location>
        <position position="309"/>
    </location>
    <ligand>
        <name>Mg(2+)</name>
        <dbReference type="ChEBI" id="CHEBI:18420"/>
        <label>2</label>
    </ligand>
</feature>
<feature type="binding site" evidence="1">
    <location>
        <position position="339"/>
    </location>
    <ligand>
        <name>Mg(2+)</name>
        <dbReference type="ChEBI" id="CHEBI:18420"/>
        <label>1</label>
    </ligand>
</feature>